<proteinExistence type="inferred from homology"/>
<name>RS16_ANASK</name>
<evidence type="ECO:0000255" key="1">
    <source>
        <dbReference type="HAMAP-Rule" id="MF_00385"/>
    </source>
</evidence>
<evidence type="ECO:0000305" key="2"/>
<feature type="chain" id="PRO_1000196323" description="Small ribosomal subunit protein bS16">
    <location>
        <begin position="1"/>
        <end position="88"/>
    </location>
</feature>
<keyword id="KW-0687">Ribonucleoprotein</keyword>
<keyword id="KW-0689">Ribosomal protein</keyword>
<gene>
    <name evidence="1" type="primary">rpsP</name>
    <name type="ordered locus">AnaeK_1963</name>
</gene>
<protein>
    <recommendedName>
        <fullName evidence="1">Small ribosomal subunit protein bS16</fullName>
    </recommendedName>
    <alternativeName>
        <fullName evidence="2">30S ribosomal protein S16</fullName>
    </alternativeName>
</protein>
<organism>
    <name type="scientific">Anaeromyxobacter sp. (strain K)</name>
    <dbReference type="NCBI Taxonomy" id="447217"/>
    <lineage>
        <taxon>Bacteria</taxon>
        <taxon>Pseudomonadati</taxon>
        <taxon>Myxococcota</taxon>
        <taxon>Myxococcia</taxon>
        <taxon>Myxococcales</taxon>
        <taxon>Cystobacterineae</taxon>
        <taxon>Anaeromyxobacteraceae</taxon>
        <taxon>Anaeromyxobacter</taxon>
    </lineage>
</organism>
<dbReference type="EMBL" id="CP001131">
    <property type="protein sequence ID" value="ACG73191.1"/>
    <property type="molecule type" value="Genomic_DNA"/>
</dbReference>
<dbReference type="RefSeq" id="WP_012525993.1">
    <property type="nucleotide sequence ID" value="NC_011145.1"/>
</dbReference>
<dbReference type="SMR" id="B4UBC9"/>
<dbReference type="KEGG" id="ank:AnaeK_1963"/>
<dbReference type="HOGENOM" id="CLU_100590_5_1_7"/>
<dbReference type="OrthoDB" id="9807878at2"/>
<dbReference type="Proteomes" id="UP000001871">
    <property type="component" value="Chromosome"/>
</dbReference>
<dbReference type="GO" id="GO:0005737">
    <property type="term" value="C:cytoplasm"/>
    <property type="evidence" value="ECO:0007669"/>
    <property type="project" value="UniProtKB-ARBA"/>
</dbReference>
<dbReference type="GO" id="GO:0015935">
    <property type="term" value="C:small ribosomal subunit"/>
    <property type="evidence" value="ECO:0007669"/>
    <property type="project" value="TreeGrafter"/>
</dbReference>
<dbReference type="GO" id="GO:0003735">
    <property type="term" value="F:structural constituent of ribosome"/>
    <property type="evidence" value="ECO:0007669"/>
    <property type="project" value="InterPro"/>
</dbReference>
<dbReference type="GO" id="GO:0006412">
    <property type="term" value="P:translation"/>
    <property type="evidence" value="ECO:0007669"/>
    <property type="project" value="UniProtKB-UniRule"/>
</dbReference>
<dbReference type="Gene3D" id="3.30.1320.10">
    <property type="match status" value="1"/>
</dbReference>
<dbReference type="HAMAP" id="MF_00385">
    <property type="entry name" value="Ribosomal_bS16"/>
    <property type="match status" value="1"/>
</dbReference>
<dbReference type="InterPro" id="IPR000307">
    <property type="entry name" value="Ribosomal_bS16"/>
</dbReference>
<dbReference type="InterPro" id="IPR023803">
    <property type="entry name" value="Ribosomal_bS16_dom_sf"/>
</dbReference>
<dbReference type="NCBIfam" id="TIGR00002">
    <property type="entry name" value="S16"/>
    <property type="match status" value="1"/>
</dbReference>
<dbReference type="PANTHER" id="PTHR12919">
    <property type="entry name" value="30S RIBOSOMAL PROTEIN S16"/>
    <property type="match status" value="1"/>
</dbReference>
<dbReference type="PANTHER" id="PTHR12919:SF20">
    <property type="entry name" value="SMALL RIBOSOMAL SUBUNIT PROTEIN BS16M"/>
    <property type="match status" value="1"/>
</dbReference>
<dbReference type="Pfam" id="PF00886">
    <property type="entry name" value="Ribosomal_S16"/>
    <property type="match status" value="1"/>
</dbReference>
<dbReference type="SUPFAM" id="SSF54565">
    <property type="entry name" value="Ribosomal protein S16"/>
    <property type="match status" value="1"/>
</dbReference>
<reference key="1">
    <citation type="submission" date="2008-08" db="EMBL/GenBank/DDBJ databases">
        <title>Complete sequence of Anaeromyxobacter sp. K.</title>
        <authorList>
            <consortium name="US DOE Joint Genome Institute"/>
            <person name="Lucas S."/>
            <person name="Copeland A."/>
            <person name="Lapidus A."/>
            <person name="Glavina del Rio T."/>
            <person name="Dalin E."/>
            <person name="Tice H."/>
            <person name="Bruce D."/>
            <person name="Goodwin L."/>
            <person name="Pitluck S."/>
            <person name="Saunders E."/>
            <person name="Brettin T."/>
            <person name="Detter J.C."/>
            <person name="Han C."/>
            <person name="Larimer F."/>
            <person name="Land M."/>
            <person name="Hauser L."/>
            <person name="Kyrpides N."/>
            <person name="Ovchinnikiva G."/>
            <person name="Beliaev A."/>
        </authorList>
    </citation>
    <scope>NUCLEOTIDE SEQUENCE [LARGE SCALE GENOMIC DNA]</scope>
    <source>
        <strain>K</strain>
    </source>
</reference>
<sequence length="88" mass="9733">MAVVLRLSRAGTHKAPFYHVVATDSRNARDGKYLEDVGIYDPTKRPERIELKVERIEHWLKAGAKPSQTVAMILKRAAKAAAPVAPKA</sequence>
<accession>B4UBC9</accession>
<comment type="similarity">
    <text evidence="1">Belongs to the bacterial ribosomal protein bS16 family.</text>
</comment>